<evidence type="ECO:0000255" key="1">
    <source>
        <dbReference type="HAMAP-Rule" id="MF_00011"/>
    </source>
</evidence>
<gene>
    <name evidence="1" type="primary">purA</name>
    <name type="ordered locus">XCC1053</name>
</gene>
<dbReference type="EC" id="6.3.4.4" evidence="1"/>
<dbReference type="EMBL" id="AE008922">
    <property type="protein sequence ID" value="AAM40352.1"/>
    <property type="molecule type" value="Genomic_DNA"/>
</dbReference>
<dbReference type="RefSeq" id="NP_636428.1">
    <property type="nucleotide sequence ID" value="NC_003902.1"/>
</dbReference>
<dbReference type="RefSeq" id="WP_011036253.1">
    <property type="nucleotide sequence ID" value="NC_003902.1"/>
</dbReference>
<dbReference type="SMR" id="Q8PBR6"/>
<dbReference type="STRING" id="190485.XCC1053"/>
<dbReference type="EnsemblBacteria" id="AAM40352">
    <property type="protein sequence ID" value="AAM40352"/>
    <property type="gene ID" value="XCC1053"/>
</dbReference>
<dbReference type="KEGG" id="xcc:XCC1053"/>
<dbReference type="PATRIC" id="fig|190485.4.peg.1118"/>
<dbReference type="eggNOG" id="COG0104">
    <property type="taxonomic scope" value="Bacteria"/>
</dbReference>
<dbReference type="HOGENOM" id="CLU_029848_0_0_6"/>
<dbReference type="OrthoDB" id="9807553at2"/>
<dbReference type="UniPathway" id="UPA00075">
    <property type="reaction ID" value="UER00335"/>
</dbReference>
<dbReference type="Proteomes" id="UP000001010">
    <property type="component" value="Chromosome"/>
</dbReference>
<dbReference type="GO" id="GO:0005737">
    <property type="term" value="C:cytoplasm"/>
    <property type="evidence" value="ECO:0000318"/>
    <property type="project" value="GO_Central"/>
</dbReference>
<dbReference type="GO" id="GO:0004019">
    <property type="term" value="F:adenylosuccinate synthase activity"/>
    <property type="evidence" value="ECO:0000318"/>
    <property type="project" value="GO_Central"/>
</dbReference>
<dbReference type="GO" id="GO:0005525">
    <property type="term" value="F:GTP binding"/>
    <property type="evidence" value="ECO:0007669"/>
    <property type="project" value="UniProtKB-UniRule"/>
</dbReference>
<dbReference type="GO" id="GO:0000287">
    <property type="term" value="F:magnesium ion binding"/>
    <property type="evidence" value="ECO:0007669"/>
    <property type="project" value="UniProtKB-UniRule"/>
</dbReference>
<dbReference type="GO" id="GO:0044208">
    <property type="term" value="P:'de novo' AMP biosynthetic process"/>
    <property type="evidence" value="ECO:0000318"/>
    <property type="project" value="GO_Central"/>
</dbReference>
<dbReference type="GO" id="GO:0046040">
    <property type="term" value="P:IMP metabolic process"/>
    <property type="evidence" value="ECO:0000318"/>
    <property type="project" value="GO_Central"/>
</dbReference>
<dbReference type="CDD" id="cd03108">
    <property type="entry name" value="AdSS"/>
    <property type="match status" value="1"/>
</dbReference>
<dbReference type="FunFam" id="1.10.300.10:FF:000001">
    <property type="entry name" value="Adenylosuccinate synthetase"/>
    <property type="match status" value="1"/>
</dbReference>
<dbReference type="FunFam" id="3.90.170.10:FF:000001">
    <property type="entry name" value="Adenylosuccinate synthetase"/>
    <property type="match status" value="1"/>
</dbReference>
<dbReference type="Gene3D" id="3.40.440.10">
    <property type="entry name" value="Adenylosuccinate Synthetase, subunit A, domain 1"/>
    <property type="match status" value="1"/>
</dbReference>
<dbReference type="Gene3D" id="1.10.300.10">
    <property type="entry name" value="Adenylosuccinate Synthetase, subunit A, domain 2"/>
    <property type="match status" value="1"/>
</dbReference>
<dbReference type="Gene3D" id="3.90.170.10">
    <property type="entry name" value="Adenylosuccinate Synthetase, subunit A, domain 3"/>
    <property type="match status" value="1"/>
</dbReference>
<dbReference type="HAMAP" id="MF_00011">
    <property type="entry name" value="Adenylosucc_synth"/>
    <property type="match status" value="1"/>
</dbReference>
<dbReference type="InterPro" id="IPR018220">
    <property type="entry name" value="Adenylosuccin_syn_GTP-bd"/>
</dbReference>
<dbReference type="InterPro" id="IPR033128">
    <property type="entry name" value="Adenylosuccin_syn_Lys_AS"/>
</dbReference>
<dbReference type="InterPro" id="IPR042109">
    <property type="entry name" value="Adenylosuccinate_synth_dom1"/>
</dbReference>
<dbReference type="InterPro" id="IPR042110">
    <property type="entry name" value="Adenylosuccinate_synth_dom2"/>
</dbReference>
<dbReference type="InterPro" id="IPR042111">
    <property type="entry name" value="Adenylosuccinate_synth_dom3"/>
</dbReference>
<dbReference type="InterPro" id="IPR001114">
    <property type="entry name" value="Adenylosuccinate_synthetase"/>
</dbReference>
<dbReference type="InterPro" id="IPR027417">
    <property type="entry name" value="P-loop_NTPase"/>
</dbReference>
<dbReference type="NCBIfam" id="NF002223">
    <property type="entry name" value="PRK01117.1"/>
    <property type="match status" value="1"/>
</dbReference>
<dbReference type="NCBIfam" id="TIGR00184">
    <property type="entry name" value="purA"/>
    <property type="match status" value="1"/>
</dbReference>
<dbReference type="PANTHER" id="PTHR11846">
    <property type="entry name" value="ADENYLOSUCCINATE SYNTHETASE"/>
    <property type="match status" value="1"/>
</dbReference>
<dbReference type="PANTHER" id="PTHR11846:SF0">
    <property type="entry name" value="ADENYLOSUCCINATE SYNTHETASE"/>
    <property type="match status" value="1"/>
</dbReference>
<dbReference type="Pfam" id="PF00709">
    <property type="entry name" value="Adenylsucc_synt"/>
    <property type="match status" value="1"/>
</dbReference>
<dbReference type="SMART" id="SM00788">
    <property type="entry name" value="Adenylsucc_synt"/>
    <property type="match status" value="1"/>
</dbReference>
<dbReference type="SUPFAM" id="SSF52540">
    <property type="entry name" value="P-loop containing nucleoside triphosphate hydrolases"/>
    <property type="match status" value="1"/>
</dbReference>
<dbReference type="PROSITE" id="PS01266">
    <property type="entry name" value="ADENYLOSUCCIN_SYN_1"/>
    <property type="match status" value="1"/>
</dbReference>
<dbReference type="PROSITE" id="PS00513">
    <property type="entry name" value="ADENYLOSUCCIN_SYN_2"/>
    <property type="match status" value="1"/>
</dbReference>
<sequence length="430" mass="46164">MGQSVVVLGAQWGDEGKGKIVDLLTEEIGAVVRFQGGHNAGHTLVINGKKTVLHLIPSGILRDDALCLIGNGVVISPAALIKEIGELESAGVEVRSRLKISPAAPLIMPYHIALDQAREKAAGGKAIGTTGRGIGPAYEDKVARRGIRIADLHYPAQLEELLRTALDYHNFVLTKYLGVEAVDFQKTFDEALAFGEYVQPMKSDVAGILHDLRKQGKRVLFEGAQGALLDIDHGTYPYVTSSNTTVGGALAGTGVGADAIDYVLGIAKAYATRVGGGPFPTELDDEVGQGIRDRGAEYGASTGRPRRCGWMDIVALKRAVAINGISGLCITKLDVLDGMEKLKVCIAYEYRGKRTEYAPLDAQGWEECTPVYLEFPGWTENTHGITEWDKLPVAARAYLRALEELAGCPISIVSTGPDRDHTMVLQDPFA</sequence>
<reference key="1">
    <citation type="journal article" date="2002" name="Nature">
        <title>Comparison of the genomes of two Xanthomonas pathogens with differing host specificities.</title>
        <authorList>
            <person name="da Silva A.C.R."/>
            <person name="Ferro J.A."/>
            <person name="Reinach F.C."/>
            <person name="Farah C.S."/>
            <person name="Furlan L.R."/>
            <person name="Quaggio R.B."/>
            <person name="Monteiro-Vitorello C.B."/>
            <person name="Van Sluys M.A."/>
            <person name="Almeida N.F. Jr."/>
            <person name="Alves L.M.C."/>
            <person name="do Amaral A.M."/>
            <person name="Bertolini M.C."/>
            <person name="Camargo L.E.A."/>
            <person name="Camarotte G."/>
            <person name="Cannavan F."/>
            <person name="Cardozo J."/>
            <person name="Chambergo F."/>
            <person name="Ciapina L.P."/>
            <person name="Cicarelli R.M.B."/>
            <person name="Coutinho L.L."/>
            <person name="Cursino-Santos J.R."/>
            <person name="El-Dorry H."/>
            <person name="Faria J.B."/>
            <person name="Ferreira A.J.S."/>
            <person name="Ferreira R.C.C."/>
            <person name="Ferro M.I.T."/>
            <person name="Formighieri E.F."/>
            <person name="Franco M.C."/>
            <person name="Greggio C.C."/>
            <person name="Gruber A."/>
            <person name="Katsuyama A.M."/>
            <person name="Kishi L.T."/>
            <person name="Leite R.P."/>
            <person name="Lemos E.G.M."/>
            <person name="Lemos M.V.F."/>
            <person name="Locali E.C."/>
            <person name="Machado M.A."/>
            <person name="Madeira A.M.B.N."/>
            <person name="Martinez-Rossi N.M."/>
            <person name="Martins E.C."/>
            <person name="Meidanis J."/>
            <person name="Menck C.F.M."/>
            <person name="Miyaki C.Y."/>
            <person name="Moon D.H."/>
            <person name="Moreira L.M."/>
            <person name="Novo M.T.M."/>
            <person name="Okura V.K."/>
            <person name="Oliveira M.C."/>
            <person name="Oliveira V.R."/>
            <person name="Pereira H.A."/>
            <person name="Rossi A."/>
            <person name="Sena J.A.D."/>
            <person name="Silva C."/>
            <person name="de Souza R.F."/>
            <person name="Spinola L.A.F."/>
            <person name="Takita M.A."/>
            <person name="Tamura R.E."/>
            <person name="Teixeira E.C."/>
            <person name="Tezza R.I.D."/>
            <person name="Trindade dos Santos M."/>
            <person name="Truffi D."/>
            <person name="Tsai S.M."/>
            <person name="White F.F."/>
            <person name="Setubal J.C."/>
            <person name="Kitajima J.P."/>
        </authorList>
    </citation>
    <scope>NUCLEOTIDE SEQUENCE [LARGE SCALE GENOMIC DNA]</scope>
    <source>
        <strain>ATCC 33913 / DSM 3586 / NCPPB 528 / LMG 568 / P 25</strain>
    </source>
</reference>
<comment type="function">
    <text evidence="1">Plays an important role in the de novo pathway of purine nucleotide biosynthesis. Catalyzes the first committed step in the biosynthesis of AMP from IMP.</text>
</comment>
<comment type="catalytic activity">
    <reaction evidence="1">
        <text>IMP + L-aspartate + GTP = N(6)-(1,2-dicarboxyethyl)-AMP + GDP + phosphate + 2 H(+)</text>
        <dbReference type="Rhea" id="RHEA:15753"/>
        <dbReference type="ChEBI" id="CHEBI:15378"/>
        <dbReference type="ChEBI" id="CHEBI:29991"/>
        <dbReference type="ChEBI" id="CHEBI:37565"/>
        <dbReference type="ChEBI" id="CHEBI:43474"/>
        <dbReference type="ChEBI" id="CHEBI:57567"/>
        <dbReference type="ChEBI" id="CHEBI:58053"/>
        <dbReference type="ChEBI" id="CHEBI:58189"/>
        <dbReference type="EC" id="6.3.4.4"/>
    </reaction>
</comment>
<comment type="cofactor">
    <cofactor evidence="1">
        <name>Mg(2+)</name>
        <dbReference type="ChEBI" id="CHEBI:18420"/>
    </cofactor>
    <text evidence="1">Binds 1 Mg(2+) ion per subunit.</text>
</comment>
<comment type="pathway">
    <text evidence="1">Purine metabolism; AMP biosynthesis via de novo pathway; AMP from IMP: step 1/2.</text>
</comment>
<comment type="subunit">
    <text evidence="1">Homodimer.</text>
</comment>
<comment type="subcellular location">
    <subcellularLocation>
        <location evidence="1">Cytoplasm</location>
    </subcellularLocation>
</comment>
<comment type="similarity">
    <text evidence="1">Belongs to the adenylosuccinate synthetase family.</text>
</comment>
<feature type="chain" id="PRO_0000095262" description="Adenylosuccinate synthetase">
    <location>
        <begin position="1"/>
        <end position="430"/>
    </location>
</feature>
<feature type="active site" description="Proton acceptor" evidence="1">
    <location>
        <position position="14"/>
    </location>
</feature>
<feature type="active site" description="Proton donor" evidence="1">
    <location>
        <position position="42"/>
    </location>
</feature>
<feature type="binding site" evidence="1">
    <location>
        <begin position="13"/>
        <end position="19"/>
    </location>
    <ligand>
        <name>GTP</name>
        <dbReference type="ChEBI" id="CHEBI:37565"/>
    </ligand>
</feature>
<feature type="binding site" description="in other chain" evidence="1">
    <location>
        <begin position="14"/>
        <end position="17"/>
    </location>
    <ligand>
        <name>IMP</name>
        <dbReference type="ChEBI" id="CHEBI:58053"/>
        <note>ligand shared between dimeric partners</note>
    </ligand>
</feature>
<feature type="binding site" evidence="1">
    <location>
        <position position="14"/>
    </location>
    <ligand>
        <name>Mg(2+)</name>
        <dbReference type="ChEBI" id="CHEBI:18420"/>
    </ligand>
</feature>
<feature type="binding site" description="in other chain" evidence="1">
    <location>
        <begin position="39"/>
        <end position="42"/>
    </location>
    <ligand>
        <name>IMP</name>
        <dbReference type="ChEBI" id="CHEBI:58053"/>
        <note>ligand shared between dimeric partners</note>
    </ligand>
</feature>
<feature type="binding site" evidence="1">
    <location>
        <begin position="41"/>
        <end position="43"/>
    </location>
    <ligand>
        <name>GTP</name>
        <dbReference type="ChEBI" id="CHEBI:37565"/>
    </ligand>
</feature>
<feature type="binding site" evidence="1">
    <location>
        <position position="41"/>
    </location>
    <ligand>
        <name>Mg(2+)</name>
        <dbReference type="ChEBI" id="CHEBI:18420"/>
    </ligand>
</feature>
<feature type="binding site" description="in other chain" evidence="1">
    <location>
        <position position="130"/>
    </location>
    <ligand>
        <name>IMP</name>
        <dbReference type="ChEBI" id="CHEBI:58053"/>
        <note>ligand shared between dimeric partners</note>
    </ligand>
</feature>
<feature type="binding site" evidence="1">
    <location>
        <position position="144"/>
    </location>
    <ligand>
        <name>IMP</name>
        <dbReference type="ChEBI" id="CHEBI:58053"/>
        <note>ligand shared between dimeric partners</note>
    </ligand>
</feature>
<feature type="binding site" description="in other chain" evidence="1">
    <location>
        <position position="225"/>
    </location>
    <ligand>
        <name>IMP</name>
        <dbReference type="ChEBI" id="CHEBI:58053"/>
        <note>ligand shared between dimeric partners</note>
    </ligand>
</feature>
<feature type="binding site" description="in other chain" evidence="1">
    <location>
        <position position="240"/>
    </location>
    <ligand>
        <name>IMP</name>
        <dbReference type="ChEBI" id="CHEBI:58053"/>
        <note>ligand shared between dimeric partners</note>
    </ligand>
</feature>
<feature type="binding site" evidence="1">
    <location>
        <begin position="300"/>
        <end position="306"/>
    </location>
    <ligand>
        <name>substrate</name>
    </ligand>
</feature>
<feature type="binding site" description="in other chain" evidence="1">
    <location>
        <position position="304"/>
    </location>
    <ligand>
        <name>IMP</name>
        <dbReference type="ChEBI" id="CHEBI:58053"/>
        <note>ligand shared between dimeric partners</note>
    </ligand>
</feature>
<feature type="binding site" evidence="1">
    <location>
        <position position="306"/>
    </location>
    <ligand>
        <name>GTP</name>
        <dbReference type="ChEBI" id="CHEBI:37565"/>
    </ligand>
</feature>
<feature type="binding site" evidence="1">
    <location>
        <begin position="332"/>
        <end position="334"/>
    </location>
    <ligand>
        <name>GTP</name>
        <dbReference type="ChEBI" id="CHEBI:37565"/>
    </ligand>
</feature>
<feature type="binding site" evidence="1">
    <location>
        <begin position="414"/>
        <end position="416"/>
    </location>
    <ligand>
        <name>GTP</name>
        <dbReference type="ChEBI" id="CHEBI:37565"/>
    </ligand>
</feature>
<accession>Q8PBR6</accession>
<keyword id="KW-0963">Cytoplasm</keyword>
<keyword id="KW-0342">GTP-binding</keyword>
<keyword id="KW-0436">Ligase</keyword>
<keyword id="KW-0460">Magnesium</keyword>
<keyword id="KW-0479">Metal-binding</keyword>
<keyword id="KW-0547">Nucleotide-binding</keyword>
<keyword id="KW-0658">Purine biosynthesis</keyword>
<keyword id="KW-1185">Reference proteome</keyword>
<name>PURA_XANCP</name>
<organism>
    <name type="scientific">Xanthomonas campestris pv. campestris (strain ATCC 33913 / DSM 3586 / NCPPB 528 / LMG 568 / P 25)</name>
    <dbReference type="NCBI Taxonomy" id="190485"/>
    <lineage>
        <taxon>Bacteria</taxon>
        <taxon>Pseudomonadati</taxon>
        <taxon>Pseudomonadota</taxon>
        <taxon>Gammaproteobacteria</taxon>
        <taxon>Lysobacterales</taxon>
        <taxon>Lysobacteraceae</taxon>
        <taxon>Xanthomonas</taxon>
    </lineage>
</organism>
<proteinExistence type="inferred from homology"/>
<protein>
    <recommendedName>
        <fullName evidence="1">Adenylosuccinate synthetase</fullName>
        <shortName evidence="1">AMPSase</shortName>
        <shortName evidence="1">AdSS</shortName>
        <ecNumber evidence="1">6.3.4.4</ecNumber>
    </recommendedName>
    <alternativeName>
        <fullName evidence="1">IMP--aspartate ligase</fullName>
    </alternativeName>
</protein>